<gene>
    <name evidence="1" type="primary">pheS</name>
    <name type="ordered locus">Tbd_1011</name>
</gene>
<comment type="catalytic activity">
    <reaction evidence="1">
        <text>tRNA(Phe) + L-phenylalanine + ATP = L-phenylalanyl-tRNA(Phe) + AMP + diphosphate + H(+)</text>
        <dbReference type="Rhea" id="RHEA:19413"/>
        <dbReference type="Rhea" id="RHEA-COMP:9668"/>
        <dbReference type="Rhea" id="RHEA-COMP:9699"/>
        <dbReference type="ChEBI" id="CHEBI:15378"/>
        <dbReference type="ChEBI" id="CHEBI:30616"/>
        <dbReference type="ChEBI" id="CHEBI:33019"/>
        <dbReference type="ChEBI" id="CHEBI:58095"/>
        <dbReference type="ChEBI" id="CHEBI:78442"/>
        <dbReference type="ChEBI" id="CHEBI:78531"/>
        <dbReference type="ChEBI" id="CHEBI:456215"/>
        <dbReference type="EC" id="6.1.1.20"/>
    </reaction>
</comment>
<comment type="cofactor">
    <cofactor evidence="1">
        <name>Mg(2+)</name>
        <dbReference type="ChEBI" id="CHEBI:18420"/>
    </cofactor>
    <text evidence="1">Binds 2 magnesium ions per tetramer.</text>
</comment>
<comment type="subunit">
    <text evidence="1">Tetramer of two alpha and two beta subunits.</text>
</comment>
<comment type="subcellular location">
    <subcellularLocation>
        <location evidence="1">Cytoplasm</location>
    </subcellularLocation>
</comment>
<comment type="similarity">
    <text evidence="1">Belongs to the class-II aminoacyl-tRNA synthetase family. Phe-tRNA synthetase alpha subunit type 1 subfamily.</text>
</comment>
<protein>
    <recommendedName>
        <fullName evidence="1">Phenylalanine--tRNA ligase alpha subunit</fullName>
        <ecNumber evidence="1">6.1.1.20</ecNumber>
    </recommendedName>
    <alternativeName>
        <fullName evidence="1">Phenylalanyl-tRNA synthetase alpha subunit</fullName>
        <shortName evidence="1">PheRS</shortName>
    </alternativeName>
</protein>
<organism>
    <name type="scientific">Thiobacillus denitrificans (strain ATCC 25259 / T1)</name>
    <dbReference type="NCBI Taxonomy" id="292415"/>
    <lineage>
        <taxon>Bacteria</taxon>
        <taxon>Pseudomonadati</taxon>
        <taxon>Pseudomonadota</taxon>
        <taxon>Betaproteobacteria</taxon>
        <taxon>Nitrosomonadales</taxon>
        <taxon>Thiobacillaceae</taxon>
        <taxon>Thiobacillus</taxon>
    </lineage>
</organism>
<evidence type="ECO:0000255" key="1">
    <source>
        <dbReference type="HAMAP-Rule" id="MF_00281"/>
    </source>
</evidence>
<proteinExistence type="inferred from homology"/>
<feature type="chain" id="PRO_0000232034" description="Phenylalanine--tRNA ligase alpha subunit">
    <location>
        <begin position="1"/>
        <end position="344"/>
    </location>
</feature>
<feature type="binding site" evidence="1">
    <location>
        <position position="258"/>
    </location>
    <ligand>
        <name>Mg(2+)</name>
        <dbReference type="ChEBI" id="CHEBI:18420"/>
        <note>shared with beta subunit</note>
    </ligand>
</feature>
<reference key="1">
    <citation type="journal article" date="2006" name="J. Bacteriol.">
        <title>The genome sequence of the obligately chemolithoautotrophic, facultatively anaerobic bacterium Thiobacillus denitrificans.</title>
        <authorList>
            <person name="Beller H.R."/>
            <person name="Chain P.S."/>
            <person name="Letain T.E."/>
            <person name="Chakicherla A."/>
            <person name="Larimer F.W."/>
            <person name="Richardson P.M."/>
            <person name="Coleman M.A."/>
            <person name="Wood A.P."/>
            <person name="Kelly D.P."/>
        </authorList>
    </citation>
    <scope>NUCLEOTIDE SEQUENCE [LARGE SCALE GENOMIC DNA]</scope>
    <source>
        <strain>ATCC 25259 / T1</strain>
    </source>
</reference>
<dbReference type="EC" id="6.1.1.20" evidence="1"/>
<dbReference type="EMBL" id="CP000116">
    <property type="protein sequence ID" value="AAZ96964.1"/>
    <property type="molecule type" value="Genomic_DNA"/>
</dbReference>
<dbReference type="RefSeq" id="WP_011311523.1">
    <property type="nucleotide sequence ID" value="NC_007404.1"/>
</dbReference>
<dbReference type="SMR" id="Q3SK30"/>
<dbReference type="STRING" id="292415.Tbd_1011"/>
<dbReference type="KEGG" id="tbd:Tbd_1011"/>
<dbReference type="eggNOG" id="COG0016">
    <property type="taxonomic scope" value="Bacteria"/>
</dbReference>
<dbReference type="HOGENOM" id="CLU_025086_0_1_4"/>
<dbReference type="OrthoDB" id="9800719at2"/>
<dbReference type="Proteomes" id="UP000008291">
    <property type="component" value="Chromosome"/>
</dbReference>
<dbReference type="GO" id="GO:0005737">
    <property type="term" value="C:cytoplasm"/>
    <property type="evidence" value="ECO:0007669"/>
    <property type="project" value="UniProtKB-SubCell"/>
</dbReference>
<dbReference type="GO" id="GO:0005524">
    <property type="term" value="F:ATP binding"/>
    <property type="evidence" value="ECO:0007669"/>
    <property type="project" value="UniProtKB-UniRule"/>
</dbReference>
<dbReference type="GO" id="GO:0000287">
    <property type="term" value="F:magnesium ion binding"/>
    <property type="evidence" value="ECO:0007669"/>
    <property type="project" value="UniProtKB-UniRule"/>
</dbReference>
<dbReference type="GO" id="GO:0004826">
    <property type="term" value="F:phenylalanine-tRNA ligase activity"/>
    <property type="evidence" value="ECO:0007669"/>
    <property type="project" value="UniProtKB-UniRule"/>
</dbReference>
<dbReference type="GO" id="GO:0000049">
    <property type="term" value="F:tRNA binding"/>
    <property type="evidence" value="ECO:0007669"/>
    <property type="project" value="InterPro"/>
</dbReference>
<dbReference type="GO" id="GO:0006432">
    <property type="term" value="P:phenylalanyl-tRNA aminoacylation"/>
    <property type="evidence" value="ECO:0007669"/>
    <property type="project" value="UniProtKB-UniRule"/>
</dbReference>
<dbReference type="CDD" id="cd00496">
    <property type="entry name" value="PheRS_alpha_core"/>
    <property type="match status" value="1"/>
</dbReference>
<dbReference type="FunFam" id="3.30.930.10:FF:000003">
    <property type="entry name" value="Phenylalanine--tRNA ligase alpha subunit"/>
    <property type="match status" value="1"/>
</dbReference>
<dbReference type="Gene3D" id="3.30.930.10">
    <property type="entry name" value="Bira Bifunctional Protein, Domain 2"/>
    <property type="match status" value="1"/>
</dbReference>
<dbReference type="HAMAP" id="MF_00281">
    <property type="entry name" value="Phe_tRNA_synth_alpha1"/>
    <property type="match status" value="1"/>
</dbReference>
<dbReference type="InterPro" id="IPR006195">
    <property type="entry name" value="aa-tRNA-synth_II"/>
</dbReference>
<dbReference type="InterPro" id="IPR045864">
    <property type="entry name" value="aa-tRNA-synth_II/BPL/LPL"/>
</dbReference>
<dbReference type="InterPro" id="IPR004529">
    <property type="entry name" value="Phe-tRNA-synth_IIc_asu"/>
</dbReference>
<dbReference type="InterPro" id="IPR004188">
    <property type="entry name" value="Phe-tRNA_ligase_II_N"/>
</dbReference>
<dbReference type="InterPro" id="IPR022911">
    <property type="entry name" value="Phe_tRNA_ligase_alpha1_bac"/>
</dbReference>
<dbReference type="InterPro" id="IPR002319">
    <property type="entry name" value="Phenylalanyl-tRNA_Synthase"/>
</dbReference>
<dbReference type="InterPro" id="IPR010978">
    <property type="entry name" value="tRNA-bd_arm"/>
</dbReference>
<dbReference type="NCBIfam" id="TIGR00468">
    <property type="entry name" value="pheS"/>
    <property type="match status" value="1"/>
</dbReference>
<dbReference type="PANTHER" id="PTHR11538:SF41">
    <property type="entry name" value="PHENYLALANINE--TRNA LIGASE, MITOCHONDRIAL"/>
    <property type="match status" value="1"/>
</dbReference>
<dbReference type="PANTHER" id="PTHR11538">
    <property type="entry name" value="PHENYLALANYL-TRNA SYNTHETASE"/>
    <property type="match status" value="1"/>
</dbReference>
<dbReference type="Pfam" id="PF02912">
    <property type="entry name" value="Phe_tRNA-synt_N"/>
    <property type="match status" value="1"/>
</dbReference>
<dbReference type="Pfam" id="PF01409">
    <property type="entry name" value="tRNA-synt_2d"/>
    <property type="match status" value="1"/>
</dbReference>
<dbReference type="SUPFAM" id="SSF55681">
    <property type="entry name" value="Class II aaRS and biotin synthetases"/>
    <property type="match status" value="1"/>
</dbReference>
<dbReference type="SUPFAM" id="SSF46589">
    <property type="entry name" value="tRNA-binding arm"/>
    <property type="match status" value="1"/>
</dbReference>
<dbReference type="PROSITE" id="PS50862">
    <property type="entry name" value="AA_TRNA_LIGASE_II"/>
    <property type="match status" value="1"/>
</dbReference>
<accession>Q3SK30</accession>
<sequence length="344" mass="38135">MRNPNEIVAEALAAIHGCPDLPSLEQIKAGYLGKSGQLTELLKSLGAMPADARKTAGARINEAKQAVEAALKIRREALQQAELDRQLAAETLDVTLPGRGLGTAGVHPVSRTLARIEALFHSIGFDVATGPEIETDFYNFTALNIPEDHPARAMHDTFYLRQNNAGGGELLRTHTSPVQIRHMQTHEPPLRIIAPGRVYRCDSDVTHTPMFHQIEGLWVDESVSFADLKGVLADFMRNFFERDDLAVRFRPSFFPFTEPSAEMDIGCVMCGGSGCRVCSHTGWLEVLGCGMVHPNVFRHVGVDAERFIGFAFGLGVERLAMLRYGVDDLRLFFENDLRFLKQFN</sequence>
<keyword id="KW-0030">Aminoacyl-tRNA synthetase</keyword>
<keyword id="KW-0067">ATP-binding</keyword>
<keyword id="KW-0963">Cytoplasm</keyword>
<keyword id="KW-0436">Ligase</keyword>
<keyword id="KW-0460">Magnesium</keyword>
<keyword id="KW-0479">Metal-binding</keyword>
<keyword id="KW-0547">Nucleotide-binding</keyword>
<keyword id="KW-0648">Protein biosynthesis</keyword>
<keyword id="KW-1185">Reference proteome</keyword>
<name>SYFA_THIDA</name>